<sequence>MHQLTLAEIARGLADKSFSSEELTGALLARIKQLDPQINSFISITDDLALAQARAADARRAAGETGVLLGAPIAHKDLFCTNGVRTSCGSKMLDNFKAPYDATVVAKLAEAGMVTLGKTNMDEFAMGSANESSHYGAVKNPWNLEHVPGGSSGGSAAAVAARLLPATTGTDTGGSIRQPAALTNLTGLKPTYGRVSRWGMIAYASSLDQGGPLARTAEDCALLLQGMAGFDAKDSTSIEEPVPDYSASLNASLQGLRIGLPKEYFGAGLDPRIADLVQASVKELEKLGAVVKEISLPNMQHAIPAYYVIAPAEASSNLSRFDGVRFGYRCEEPKDLTDLYKRSRGEGFGVEVQRRIMVGTYALSAGYYDAYYVKAQQIRRLIKNDFMAAFNDVDLILGPTTPNPAWKLGAKSSDPVAAYLEDVYTITANLAGLPGLSMPAGFVDGLPVGVQLLAPYFQEGRLLNVAHRYQQVTDWHTRAPNGF</sequence>
<gene>
    <name evidence="1" type="primary">gatA</name>
    <name type="ordered locus">Pput_0971</name>
</gene>
<comment type="function">
    <text evidence="1">Allows the formation of correctly charged Gln-tRNA(Gln) through the transamidation of misacylated Glu-tRNA(Gln) in organisms which lack glutaminyl-tRNA synthetase. The reaction takes place in the presence of glutamine and ATP through an activated gamma-phospho-Glu-tRNA(Gln).</text>
</comment>
<comment type="catalytic activity">
    <reaction evidence="1">
        <text>L-glutamyl-tRNA(Gln) + L-glutamine + ATP + H2O = L-glutaminyl-tRNA(Gln) + L-glutamate + ADP + phosphate + H(+)</text>
        <dbReference type="Rhea" id="RHEA:17521"/>
        <dbReference type="Rhea" id="RHEA-COMP:9681"/>
        <dbReference type="Rhea" id="RHEA-COMP:9684"/>
        <dbReference type="ChEBI" id="CHEBI:15377"/>
        <dbReference type="ChEBI" id="CHEBI:15378"/>
        <dbReference type="ChEBI" id="CHEBI:29985"/>
        <dbReference type="ChEBI" id="CHEBI:30616"/>
        <dbReference type="ChEBI" id="CHEBI:43474"/>
        <dbReference type="ChEBI" id="CHEBI:58359"/>
        <dbReference type="ChEBI" id="CHEBI:78520"/>
        <dbReference type="ChEBI" id="CHEBI:78521"/>
        <dbReference type="ChEBI" id="CHEBI:456216"/>
        <dbReference type="EC" id="6.3.5.7"/>
    </reaction>
</comment>
<comment type="subunit">
    <text evidence="1">Heterotrimer of A, B and C subunits.</text>
</comment>
<comment type="similarity">
    <text evidence="1">Belongs to the amidase family. GatA subfamily.</text>
</comment>
<evidence type="ECO:0000255" key="1">
    <source>
        <dbReference type="HAMAP-Rule" id="MF_00120"/>
    </source>
</evidence>
<organism>
    <name type="scientific">Pseudomonas putida (strain ATCC 700007 / DSM 6899 / JCM 31910 / BCRC 17059 / LMG 24140 / F1)</name>
    <dbReference type="NCBI Taxonomy" id="351746"/>
    <lineage>
        <taxon>Bacteria</taxon>
        <taxon>Pseudomonadati</taxon>
        <taxon>Pseudomonadota</taxon>
        <taxon>Gammaproteobacteria</taxon>
        <taxon>Pseudomonadales</taxon>
        <taxon>Pseudomonadaceae</taxon>
        <taxon>Pseudomonas</taxon>
    </lineage>
</organism>
<reference key="1">
    <citation type="submission" date="2007-05" db="EMBL/GenBank/DDBJ databases">
        <title>Complete sequence of Pseudomonas putida F1.</title>
        <authorList>
            <consortium name="US DOE Joint Genome Institute"/>
            <person name="Copeland A."/>
            <person name="Lucas S."/>
            <person name="Lapidus A."/>
            <person name="Barry K."/>
            <person name="Detter J.C."/>
            <person name="Glavina del Rio T."/>
            <person name="Hammon N."/>
            <person name="Israni S."/>
            <person name="Dalin E."/>
            <person name="Tice H."/>
            <person name="Pitluck S."/>
            <person name="Chain P."/>
            <person name="Malfatti S."/>
            <person name="Shin M."/>
            <person name="Vergez L."/>
            <person name="Schmutz J."/>
            <person name="Larimer F."/>
            <person name="Land M."/>
            <person name="Hauser L."/>
            <person name="Kyrpides N."/>
            <person name="Lykidis A."/>
            <person name="Parales R."/>
            <person name="Richardson P."/>
        </authorList>
    </citation>
    <scope>NUCLEOTIDE SEQUENCE [LARGE SCALE GENOMIC DNA]</scope>
    <source>
        <strain>ATCC 700007 / DSM 6899 / JCM 31910 / BCRC 17059 / LMG 24140 / F1</strain>
    </source>
</reference>
<feature type="chain" id="PRO_1000015889" description="Glutamyl-tRNA(Gln) amidotransferase subunit A">
    <location>
        <begin position="1"/>
        <end position="483"/>
    </location>
</feature>
<feature type="active site" description="Charge relay system" evidence="1">
    <location>
        <position position="76"/>
    </location>
</feature>
<feature type="active site" description="Charge relay system" evidence="1">
    <location>
        <position position="151"/>
    </location>
</feature>
<feature type="active site" description="Acyl-ester intermediate" evidence="1">
    <location>
        <position position="175"/>
    </location>
</feature>
<accession>A5VZ22</accession>
<keyword id="KW-0067">ATP-binding</keyword>
<keyword id="KW-0436">Ligase</keyword>
<keyword id="KW-0547">Nucleotide-binding</keyword>
<keyword id="KW-0648">Protein biosynthesis</keyword>
<dbReference type="EC" id="6.3.5.7" evidence="1"/>
<dbReference type="EMBL" id="CP000712">
    <property type="protein sequence ID" value="ABQ77132.1"/>
    <property type="molecule type" value="Genomic_DNA"/>
</dbReference>
<dbReference type="SMR" id="A5VZ22"/>
<dbReference type="KEGG" id="ppf:Pput_0971"/>
<dbReference type="eggNOG" id="COG0154">
    <property type="taxonomic scope" value="Bacteria"/>
</dbReference>
<dbReference type="HOGENOM" id="CLU_009600_0_3_6"/>
<dbReference type="GO" id="GO:0030956">
    <property type="term" value="C:glutamyl-tRNA(Gln) amidotransferase complex"/>
    <property type="evidence" value="ECO:0007669"/>
    <property type="project" value="InterPro"/>
</dbReference>
<dbReference type="GO" id="GO:0005524">
    <property type="term" value="F:ATP binding"/>
    <property type="evidence" value="ECO:0007669"/>
    <property type="project" value="UniProtKB-KW"/>
</dbReference>
<dbReference type="GO" id="GO:0050567">
    <property type="term" value="F:glutaminyl-tRNA synthase (glutamine-hydrolyzing) activity"/>
    <property type="evidence" value="ECO:0007669"/>
    <property type="project" value="UniProtKB-UniRule"/>
</dbReference>
<dbReference type="GO" id="GO:0006412">
    <property type="term" value="P:translation"/>
    <property type="evidence" value="ECO:0007669"/>
    <property type="project" value="UniProtKB-UniRule"/>
</dbReference>
<dbReference type="Gene3D" id="3.90.1300.10">
    <property type="entry name" value="Amidase signature (AS) domain"/>
    <property type="match status" value="1"/>
</dbReference>
<dbReference type="HAMAP" id="MF_00120">
    <property type="entry name" value="GatA"/>
    <property type="match status" value="1"/>
</dbReference>
<dbReference type="InterPro" id="IPR000120">
    <property type="entry name" value="Amidase"/>
</dbReference>
<dbReference type="InterPro" id="IPR020556">
    <property type="entry name" value="Amidase_CS"/>
</dbReference>
<dbReference type="InterPro" id="IPR023631">
    <property type="entry name" value="Amidase_dom"/>
</dbReference>
<dbReference type="InterPro" id="IPR036928">
    <property type="entry name" value="AS_sf"/>
</dbReference>
<dbReference type="InterPro" id="IPR004412">
    <property type="entry name" value="GatA"/>
</dbReference>
<dbReference type="NCBIfam" id="TIGR00132">
    <property type="entry name" value="gatA"/>
    <property type="match status" value="1"/>
</dbReference>
<dbReference type="PANTHER" id="PTHR11895:SF151">
    <property type="entry name" value="GLUTAMYL-TRNA(GLN) AMIDOTRANSFERASE SUBUNIT A"/>
    <property type="match status" value="1"/>
</dbReference>
<dbReference type="PANTHER" id="PTHR11895">
    <property type="entry name" value="TRANSAMIDASE"/>
    <property type="match status" value="1"/>
</dbReference>
<dbReference type="Pfam" id="PF01425">
    <property type="entry name" value="Amidase"/>
    <property type="match status" value="1"/>
</dbReference>
<dbReference type="SUPFAM" id="SSF75304">
    <property type="entry name" value="Amidase signature (AS) enzymes"/>
    <property type="match status" value="1"/>
</dbReference>
<dbReference type="PROSITE" id="PS00571">
    <property type="entry name" value="AMIDASES"/>
    <property type="match status" value="1"/>
</dbReference>
<protein>
    <recommendedName>
        <fullName evidence="1">Glutamyl-tRNA(Gln) amidotransferase subunit A</fullName>
        <shortName evidence="1">Glu-ADT subunit A</shortName>
        <ecNumber evidence="1">6.3.5.7</ecNumber>
    </recommendedName>
</protein>
<name>GATA_PSEP1</name>
<proteinExistence type="inferred from homology"/>